<organism>
    <name type="scientific">Yersinia enterocolitica serotype O:8 / biotype 1B (strain NCTC 13174 / 8081)</name>
    <dbReference type="NCBI Taxonomy" id="393305"/>
    <lineage>
        <taxon>Bacteria</taxon>
        <taxon>Pseudomonadati</taxon>
        <taxon>Pseudomonadota</taxon>
        <taxon>Gammaproteobacteria</taxon>
        <taxon>Enterobacterales</taxon>
        <taxon>Yersiniaceae</taxon>
        <taxon>Yersinia</taxon>
    </lineage>
</organism>
<gene>
    <name evidence="1" type="primary">tsaC</name>
    <name type="synonym">rimN</name>
    <name type="ordered locus">YE3885</name>
</gene>
<comment type="function">
    <text evidence="1">Required for the formation of a threonylcarbamoyl group on adenosine at position 37 (t(6)A37) in tRNAs that read codons beginning with adenine. Catalyzes the conversion of L-threonine, HCO(3)(-)/CO(2) and ATP to give threonylcarbamoyl-AMP (TC-AMP) as the acyladenylate intermediate, with the release of diphosphate.</text>
</comment>
<comment type="catalytic activity">
    <reaction evidence="1">
        <text>L-threonine + hydrogencarbonate + ATP = L-threonylcarbamoyladenylate + diphosphate + H2O</text>
        <dbReference type="Rhea" id="RHEA:36407"/>
        <dbReference type="ChEBI" id="CHEBI:15377"/>
        <dbReference type="ChEBI" id="CHEBI:17544"/>
        <dbReference type="ChEBI" id="CHEBI:30616"/>
        <dbReference type="ChEBI" id="CHEBI:33019"/>
        <dbReference type="ChEBI" id="CHEBI:57926"/>
        <dbReference type="ChEBI" id="CHEBI:73682"/>
        <dbReference type="EC" id="2.7.7.87"/>
    </reaction>
</comment>
<comment type="subcellular location">
    <subcellularLocation>
        <location evidence="1">Cytoplasm</location>
    </subcellularLocation>
</comment>
<comment type="similarity">
    <text evidence="1">Belongs to the SUA5 family. TsaC subfamily.</text>
</comment>
<name>TSAC_YERE8</name>
<evidence type="ECO:0000255" key="1">
    <source>
        <dbReference type="HAMAP-Rule" id="MF_01852"/>
    </source>
</evidence>
<feature type="chain" id="PRO_0000353021" description="Threonylcarbamoyl-AMP synthase">
    <location>
        <begin position="1"/>
        <end position="190"/>
    </location>
</feature>
<feature type="domain" description="YrdC-like" evidence="1">
    <location>
        <begin position="7"/>
        <end position="190"/>
    </location>
</feature>
<sequence length="190" mass="20871">MSRNENRAALSDVLQALQQEEVIAYPTEAVFGLGCDPDSEKAVNALLALKQRPWQKGLILIAANYEQLKPYVDDSALTDSQRETIFSVWPGPVTWVIPTHPETPRWLTGSFDSLAVRVSDHPLVQQLCSQYGKPLVSTSANLSGQEPCRTIEEVRIQFGSSLPVLAGLVGGRLNPSEIRDALTGKQFRQG</sequence>
<accession>A1JRY6</accession>
<keyword id="KW-0067">ATP-binding</keyword>
<keyword id="KW-0963">Cytoplasm</keyword>
<keyword id="KW-0547">Nucleotide-binding</keyword>
<keyword id="KW-0548">Nucleotidyltransferase</keyword>
<keyword id="KW-0808">Transferase</keyword>
<keyword id="KW-0819">tRNA processing</keyword>
<reference key="1">
    <citation type="journal article" date="2006" name="PLoS Genet.">
        <title>The complete genome sequence and comparative genome analysis of the high pathogenicity Yersinia enterocolitica strain 8081.</title>
        <authorList>
            <person name="Thomson N.R."/>
            <person name="Howard S."/>
            <person name="Wren B.W."/>
            <person name="Holden M.T.G."/>
            <person name="Crossman L."/>
            <person name="Challis G.L."/>
            <person name="Churcher C."/>
            <person name="Mungall K."/>
            <person name="Brooks K."/>
            <person name="Chillingworth T."/>
            <person name="Feltwell T."/>
            <person name="Abdellah Z."/>
            <person name="Hauser H."/>
            <person name="Jagels K."/>
            <person name="Maddison M."/>
            <person name="Moule S."/>
            <person name="Sanders M."/>
            <person name="Whitehead S."/>
            <person name="Quail M.A."/>
            <person name="Dougan G."/>
            <person name="Parkhill J."/>
            <person name="Prentice M.B."/>
        </authorList>
    </citation>
    <scope>NUCLEOTIDE SEQUENCE [LARGE SCALE GENOMIC DNA]</scope>
    <source>
        <strain>NCTC 13174 / 8081</strain>
    </source>
</reference>
<dbReference type="EC" id="2.7.7.87" evidence="1"/>
<dbReference type="EMBL" id="AM286415">
    <property type="protein sequence ID" value="CAL13904.1"/>
    <property type="molecule type" value="Genomic_DNA"/>
</dbReference>
<dbReference type="RefSeq" id="WP_005174593.1">
    <property type="nucleotide sequence ID" value="NC_008800.1"/>
</dbReference>
<dbReference type="RefSeq" id="YP_001008030.1">
    <property type="nucleotide sequence ID" value="NC_008800.1"/>
</dbReference>
<dbReference type="SMR" id="A1JRY6"/>
<dbReference type="KEGG" id="yen:YE3885"/>
<dbReference type="PATRIC" id="fig|393305.7.peg.4134"/>
<dbReference type="eggNOG" id="COG0009">
    <property type="taxonomic scope" value="Bacteria"/>
</dbReference>
<dbReference type="HOGENOM" id="CLU_031397_6_0_6"/>
<dbReference type="OrthoDB" id="9814580at2"/>
<dbReference type="Proteomes" id="UP000000642">
    <property type="component" value="Chromosome"/>
</dbReference>
<dbReference type="GO" id="GO:0005737">
    <property type="term" value="C:cytoplasm"/>
    <property type="evidence" value="ECO:0007669"/>
    <property type="project" value="UniProtKB-SubCell"/>
</dbReference>
<dbReference type="GO" id="GO:0005524">
    <property type="term" value="F:ATP binding"/>
    <property type="evidence" value="ECO:0007669"/>
    <property type="project" value="UniProtKB-UniRule"/>
</dbReference>
<dbReference type="GO" id="GO:0003725">
    <property type="term" value="F:double-stranded RNA binding"/>
    <property type="evidence" value="ECO:0007669"/>
    <property type="project" value="InterPro"/>
</dbReference>
<dbReference type="GO" id="GO:0061710">
    <property type="term" value="F:L-threonylcarbamoyladenylate synthase"/>
    <property type="evidence" value="ECO:0007669"/>
    <property type="project" value="UniProtKB-EC"/>
</dbReference>
<dbReference type="GO" id="GO:0000049">
    <property type="term" value="F:tRNA binding"/>
    <property type="evidence" value="ECO:0007669"/>
    <property type="project" value="TreeGrafter"/>
</dbReference>
<dbReference type="GO" id="GO:0006450">
    <property type="term" value="P:regulation of translational fidelity"/>
    <property type="evidence" value="ECO:0007669"/>
    <property type="project" value="TreeGrafter"/>
</dbReference>
<dbReference type="GO" id="GO:0002949">
    <property type="term" value="P:tRNA threonylcarbamoyladenosine modification"/>
    <property type="evidence" value="ECO:0007669"/>
    <property type="project" value="UniProtKB-UniRule"/>
</dbReference>
<dbReference type="FunFam" id="3.90.870.10:FF:000004">
    <property type="entry name" value="Threonylcarbamoyl-AMP synthase"/>
    <property type="match status" value="1"/>
</dbReference>
<dbReference type="Gene3D" id="3.90.870.10">
    <property type="entry name" value="DHBP synthase"/>
    <property type="match status" value="1"/>
</dbReference>
<dbReference type="HAMAP" id="MF_01852">
    <property type="entry name" value="TsaC"/>
    <property type="match status" value="1"/>
</dbReference>
<dbReference type="InterPro" id="IPR017945">
    <property type="entry name" value="DHBP_synth_RibB-like_a/b_dom"/>
</dbReference>
<dbReference type="InterPro" id="IPR006070">
    <property type="entry name" value="Sua5-like_dom"/>
</dbReference>
<dbReference type="InterPro" id="IPR023535">
    <property type="entry name" value="TC-AMP_synthase"/>
</dbReference>
<dbReference type="InterPro" id="IPR050156">
    <property type="entry name" value="TC-AMP_synthase_SUA5"/>
</dbReference>
<dbReference type="NCBIfam" id="NF007919">
    <property type="entry name" value="PRK10634.1"/>
    <property type="match status" value="1"/>
</dbReference>
<dbReference type="PANTHER" id="PTHR17490">
    <property type="entry name" value="SUA5"/>
    <property type="match status" value="1"/>
</dbReference>
<dbReference type="PANTHER" id="PTHR17490:SF18">
    <property type="entry name" value="THREONYLCARBAMOYL-AMP SYNTHASE"/>
    <property type="match status" value="1"/>
</dbReference>
<dbReference type="Pfam" id="PF01300">
    <property type="entry name" value="Sua5_yciO_yrdC"/>
    <property type="match status" value="1"/>
</dbReference>
<dbReference type="SUPFAM" id="SSF55821">
    <property type="entry name" value="YrdC/RibB"/>
    <property type="match status" value="1"/>
</dbReference>
<dbReference type="PROSITE" id="PS51163">
    <property type="entry name" value="YRDC"/>
    <property type="match status" value="1"/>
</dbReference>
<protein>
    <recommendedName>
        <fullName evidence="1">Threonylcarbamoyl-AMP synthase</fullName>
        <shortName evidence="1">TC-AMP synthase</shortName>
        <ecNumber evidence="1">2.7.7.87</ecNumber>
    </recommendedName>
    <alternativeName>
        <fullName evidence="1">L-threonylcarbamoyladenylate synthase</fullName>
    </alternativeName>
    <alternativeName>
        <fullName evidence="1">t(6)A37 threonylcarbamoyladenosine biosynthesis protein TsaC</fullName>
    </alternativeName>
    <alternativeName>
        <fullName evidence="1">tRNA threonylcarbamoyladenosine biosynthesis protein TsaC</fullName>
    </alternativeName>
</protein>
<proteinExistence type="inferred from homology"/>